<accession>Q8FB20</accession>
<sequence length="359" mass="39048">MQAATVLINRRALRHNLQRLRELAPASKLVAVVKANAYGHGLIETARTLPDADAFGVARLEEALRLRAGGITRPILLLEGFFEADDLPTISAEHLHTAVHNEEQLVALENAELKEPVTVWMKLDTGMHRLGVLPEQAEAFYQRLSQCKNVRQPVNIVSHFARADEPQSGATEKQLDIFNTFCEGKPGQRSIAASGGILLWPQSHFDWARPGIILYGVSPLEDGTTGADFGCQPVMSLTSSLIAVREHKAGEPVGYGGTWVSERDTRLGVVAMGYGDGYPRAAPSGTPVLVNGREVPIVGRVAMDMICVDLGPQAQDKAGDPVILWGEGLPVERIAEMTKVSAYELITRLTSRVAMKYVD</sequence>
<organism>
    <name type="scientific">Escherichia coli O6:H1 (strain CFT073 / ATCC 700928 / UPEC)</name>
    <dbReference type="NCBI Taxonomy" id="199310"/>
    <lineage>
        <taxon>Bacteria</taxon>
        <taxon>Pseudomonadati</taxon>
        <taxon>Pseudomonadota</taxon>
        <taxon>Gammaproteobacteria</taxon>
        <taxon>Enterobacterales</taxon>
        <taxon>Enterobacteriaceae</taxon>
        <taxon>Escherichia</taxon>
    </lineage>
</organism>
<gene>
    <name type="primary">alr</name>
    <name type="ordered locus">c5028</name>
</gene>
<feature type="chain" id="PRO_0000114515" description="Alanine racemase, biosynthetic">
    <location>
        <begin position="1"/>
        <end position="359"/>
    </location>
</feature>
<feature type="active site" description="Proton acceptor; specific for D-alanine" evidence="1">
    <location>
        <position position="34"/>
    </location>
</feature>
<feature type="active site" description="Proton acceptor; specific for L-alanine" evidence="1">
    <location>
        <position position="255"/>
    </location>
</feature>
<feature type="binding site" evidence="1">
    <location>
        <position position="129"/>
    </location>
    <ligand>
        <name>substrate</name>
    </ligand>
</feature>
<feature type="binding site" evidence="1">
    <location>
        <position position="303"/>
    </location>
    <ligand>
        <name>substrate</name>
    </ligand>
</feature>
<feature type="modified residue" description="N6-(pyridoxal phosphate)lysine" evidence="1">
    <location>
        <position position="34"/>
    </location>
</feature>
<dbReference type="EC" id="5.1.1.1"/>
<dbReference type="EMBL" id="AE014075">
    <property type="protein sequence ID" value="AAN83454.1"/>
    <property type="molecule type" value="Genomic_DNA"/>
</dbReference>
<dbReference type="RefSeq" id="WP_001147288.1">
    <property type="nucleotide sequence ID" value="NZ_CP051263.1"/>
</dbReference>
<dbReference type="SMR" id="Q8FB20"/>
<dbReference type="STRING" id="199310.c5028"/>
<dbReference type="KEGG" id="ecc:c5028"/>
<dbReference type="eggNOG" id="COG0787">
    <property type="taxonomic scope" value="Bacteria"/>
</dbReference>
<dbReference type="HOGENOM" id="CLU_028393_1_0_6"/>
<dbReference type="BioCyc" id="ECOL199310:C5028-MONOMER"/>
<dbReference type="UniPathway" id="UPA00042">
    <property type="reaction ID" value="UER00497"/>
</dbReference>
<dbReference type="UniPathway" id="UPA00219"/>
<dbReference type="Proteomes" id="UP000001410">
    <property type="component" value="Chromosome"/>
</dbReference>
<dbReference type="GO" id="GO:0005829">
    <property type="term" value="C:cytosol"/>
    <property type="evidence" value="ECO:0007669"/>
    <property type="project" value="TreeGrafter"/>
</dbReference>
<dbReference type="GO" id="GO:0008784">
    <property type="term" value="F:alanine racemase activity"/>
    <property type="evidence" value="ECO:0007669"/>
    <property type="project" value="UniProtKB-UniRule"/>
</dbReference>
<dbReference type="GO" id="GO:0030170">
    <property type="term" value="F:pyridoxal phosphate binding"/>
    <property type="evidence" value="ECO:0007669"/>
    <property type="project" value="UniProtKB-UniRule"/>
</dbReference>
<dbReference type="GO" id="GO:0071555">
    <property type="term" value="P:cell wall organization"/>
    <property type="evidence" value="ECO:0007669"/>
    <property type="project" value="UniProtKB-KW"/>
</dbReference>
<dbReference type="GO" id="GO:0030632">
    <property type="term" value="P:D-alanine biosynthetic process"/>
    <property type="evidence" value="ECO:0007669"/>
    <property type="project" value="UniProtKB-UniRule"/>
</dbReference>
<dbReference type="GO" id="GO:0009252">
    <property type="term" value="P:peptidoglycan biosynthetic process"/>
    <property type="evidence" value="ECO:0007669"/>
    <property type="project" value="UniProtKB-UniPathway"/>
</dbReference>
<dbReference type="GO" id="GO:0008360">
    <property type="term" value="P:regulation of cell shape"/>
    <property type="evidence" value="ECO:0007669"/>
    <property type="project" value="UniProtKB-KW"/>
</dbReference>
<dbReference type="CDD" id="cd06827">
    <property type="entry name" value="PLPDE_III_AR_proteobact"/>
    <property type="match status" value="1"/>
</dbReference>
<dbReference type="FunFam" id="2.40.37.10:FF:000002">
    <property type="entry name" value="Alanine racemase"/>
    <property type="match status" value="1"/>
</dbReference>
<dbReference type="FunFam" id="3.20.20.10:FF:000002">
    <property type="entry name" value="Alanine racemase"/>
    <property type="match status" value="1"/>
</dbReference>
<dbReference type="Gene3D" id="3.20.20.10">
    <property type="entry name" value="Alanine racemase"/>
    <property type="match status" value="1"/>
</dbReference>
<dbReference type="Gene3D" id="2.40.37.10">
    <property type="entry name" value="Lyase, Ornithine Decarboxylase, Chain A, domain 1"/>
    <property type="match status" value="1"/>
</dbReference>
<dbReference type="HAMAP" id="MF_01201">
    <property type="entry name" value="Ala_racemase"/>
    <property type="match status" value="1"/>
</dbReference>
<dbReference type="InterPro" id="IPR000821">
    <property type="entry name" value="Ala_racemase"/>
</dbReference>
<dbReference type="InterPro" id="IPR009006">
    <property type="entry name" value="Ala_racemase/Decarboxylase_C"/>
</dbReference>
<dbReference type="InterPro" id="IPR011079">
    <property type="entry name" value="Ala_racemase_C"/>
</dbReference>
<dbReference type="InterPro" id="IPR001608">
    <property type="entry name" value="Ala_racemase_N"/>
</dbReference>
<dbReference type="InterPro" id="IPR020622">
    <property type="entry name" value="Ala_racemase_pyridoxalP-BS"/>
</dbReference>
<dbReference type="InterPro" id="IPR029066">
    <property type="entry name" value="PLP-binding_barrel"/>
</dbReference>
<dbReference type="NCBIfam" id="TIGR00492">
    <property type="entry name" value="alr"/>
    <property type="match status" value="1"/>
</dbReference>
<dbReference type="PANTHER" id="PTHR30511">
    <property type="entry name" value="ALANINE RACEMASE"/>
    <property type="match status" value="1"/>
</dbReference>
<dbReference type="PANTHER" id="PTHR30511:SF4">
    <property type="entry name" value="ALANINE RACEMASE, BIOSYNTHETIC"/>
    <property type="match status" value="1"/>
</dbReference>
<dbReference type="Pfam" id="PF00842">
    <property type="entry name" value="Ala_racemase_C"/>
    <property type="match status" value="1"/>
</dbReference>
<dbReference type="Pfam" id="PF01168">
    <property type="entry name" value="Ala_racemase_N"/>
    <property type="match status" value="1"/>
</dbReference>
<dbReference type="PRINTS" id="PR00992">
    <property type="entry name" value="ALARACEMASE"/>
</dbReference>
<dbReference type="SMART" id="SM01005">
    <property type="entry name" value="Ala_racemase_C"/>
    <property type="match status" value="1"/>
</dbReference>
<dbReference type="SUPFAM" id="SSF50621">
    <property type="entry name" value="Alanine racemase C-terminal domain-like"/>
    <property type="match status" value="1"/>
</dbReference>
<dbReference type="SUPFAM" id="SSF51419">
    <property type="entry name" value="PLP-binding barrel"/>
    <property type="match status" value="1"/>
</dbReference>
<dbReference type="PROSITE" id="PS00395">
    <property type="entry name" value="ALANINE_RACEMASE"/>
    <property type="match status" value="1"/>
</dbReference>
<keyword id="KW-0133">Cell shape</keyword>
<keyword id="KW-0961">Cell wall biogenesis/degradation</keyword>
<keyword id="KW-0413">Isomerase</keyword>
<keyword id="KW-0573">Peptidoglycan synthesis</keyword>
<keyword id="KW-0663">Pyridoxal phosphate</keyword>
<keyword id="KW-1185">Reference proteome</keyword>
<proteinExistence type="inferred from homology"/>
<reference key="1">
    <citation type="journal article" date="2002" name="Proc. Natl. Acad. Sci. U.S.A.">
        <title>Extensive mosaic structure revealed by the complete genome sequence of uropathogenic Escherichia coli.</title>
        <authorList>
            <person name="Welch R.A."/>
            <person name="Burland V."/>
            <person name="Plunkett G. III"/>
            <person name="Redford P."/>
            <person name="Roesch P."/>
            <person name="Rasko D."/>
            <person name="Buckles E.L."/>
            <person name="Liou S.-R."/>
            <person name="Boutin A."/>
            <person name="Hackett J."/>
            <person name="Stroud D."/>
            <person name="Mayhew G.F."/>
            <person name="Rose D.J."/>
            <person name="Zhou S."/>
            <person name="Schwartz D.C."/>
            <person name="Perna N.T."/>
            <person name="Mobley H.L.T."/>
            <person name="Donnenberg M.S."/>
            <person name="Blattner F.R."/>
        </authorList>
    </citation>
    <scope>NUCLEOTIDE SEQUENCE [LARGE SCALE GENOMIC DNA]</scope>
    <source>
        <strain>CFT073 / ATCC 700928 / UPEC</strain>
    </source>
</reference>
<protein>
    <recommendedName>
        <fullName>Alanine racemase, biosynthetic</fullName>
        <ecNumber>5.1.1.1</ecNumber>
    </recommendedName>
</protein>
<name>ALR1_ECOL6</name>
<evidence type="ECO:0000250" key="1"/>
<evidence type="ECO:0000305" key="2"/>
<comment type="function">
    <text evidence="1">Catalyzes the interconversion of L-alanine and D-alanine. Provides the D-alanine required for cell wall biosynthesis (By similarity).</text>
</comment>
<comment type="catalytic activity">
    <reaction>
        <text>L-alanine = D-alanine</text>
        <dbReference type="Rhea" id="RHEA:20249"/>
        <dbReference type="ChEBI" id="CHEBI:57416"/>
        <dbReference type="ChEBI" id="CHEBI:57972"/>
        <dbReference type="EC" id="5.1.1.1"/>
    </reaction>
</comment>
<comment type="cofactor">
    <cofactor evidence="1">
        <name>pyridoxal 5'-phosphate</name>
        <dbReference type="ChEBI" id="CHEBI:597326"/>
    </cofactor>
</comment>
<comment type="pathway">
    <text>Amino-acid biosynthesis; D-alanine biosynthesis; D-alanine from L-alanine: step 1/1.</text>
</comment>
<comment type="pathway">
    <text>Cell wall biogenesis; peptidoglycan biosynthesis.</text>
</comment>
<comment type="similarity">
    <text evidence="2">Belongs to the alanine racemase family.</text>
</comment>